<organism>
    <name type="scientific">Streptococcus pneumoniae serotype 2 (strain D39 / NCTC 7466)</name>
    <dbReference type="NCBI Taxonomy" id="373153"/>
    <lineage>
        <taxon>Bacteria</taxon>
        <taxon>Bacillati</taxon>
        <taxon>Bacillota</taxon>
        <taxon>Bacilli</taxon>
        <taxon>Lactobacillales</taxon>
        <taxon>Streptococcaceae</taxon>
        <taxon>Streptococcus</taxon>
    </lineage>
</organism>
<feature type="chain" id="PRO_0000387157" description="Ribosomal RNA small subunit methyltransferase H">
    <location>
        <begin position="1"/>
        <end position="316"/>
    </location>
</feature>
<feature type="binding site" evidence="1">
    <location>
        <begin position="35"/>
        <end position="37"/>
    </location>
    <ligand>
        <name>S-adenosyl-L-methionine</name>
        <dbReference type="ChEBI" id="CHEBI:59789"/>
    </ligand>
</feature>
<feature type="binding site" evidence="1">
    <location>
        <position position="55"/>
    </location>
    <ligand>
        <name>S-adenosyl-L-methionine</name>
        <dbReference type="ChEBI" id="CHEBI:59789"/>
    </ligand>
</feature>
<feature type="binding site" evidence="1">
    <location>
        <position position="84"/>
    </location>
    <ligand>
        <name>S-adenosyl-L-methionine</name>
        <dbReference type="ChEBI" id="CHEBI:59789"/>
    </ligand>
</feature>
<feature type="binding site" evidence="1">
    <location>
        <position position="105"/>
    </location>
    <ligand>
        <name>S-adenosyl-L-methionine</name>
        <dbReference type="ChEBI" id="CHEBI:59789"/>
    </ligand>
</feature>
<feature type="binding site" evidence="1">
    <location>
        <position position="112"/>
    </location>
    <ligand>
        <name>S-adenosyl-L-methionine</name>
        <dbReference type="ChEBI" id="CHEBI:59789"/>
    </ligand>
</feature>
<comment type="function">
    <text evidence="1">Specifically methylates the N4 position of cytidine in position 1402 (C1402) of 16S rRNA.</text>
</comment>
<comment type="catalytic activity">
    <reaction evidence="1">
        <text>cytidine(1402) in 16S rRNA + S-adenosyl-L-methionine = N(4)-methylcytidine(1402) in 16S rRNA + S-adenosyl-L-homocysteine + H(+)</text>
        <dbReference type="Rhea" id="RHEA:42928"/>
        <dbReference type="Rhea" id="RHEA-COMP:10286"/>
        <dbReference type="Rhea" id="RHEA-COMP:10287"/>
        <dbReference type="ChEBI" id="CHEBI:15378"/>
        <dbReference type="ChEBI" id="CHEBI:57856"/>
        <dbReference type="ChEBI" id="CHEBI:59789"/>
        <dbReference type="ChEBI" id="CHEBI:74506"/>
        <dbReference type="ChEBI" id="CHEBI:82748"/>
        <dbReference type="EC" id="2.1.1.199"/>
    </reaction>
</comment>
<comment type="subcellular location">
    <subcellularLocation>
        <location evidence="1">Cytoplasm</location>
    </subcellularLocation>
</comment>
<comment type="similarity">
    <text evidence="1">Belongs to the methyltransferase superfamily. RsmH family.</text>
</comment>
<proteinExistence type="inferred from homology"/>
<sequence length="316" mass="36065">MTKEFHHVTVLLHETIDMLDVKPEGIYVDATLGGAGHSEYLLSKLSEKGHLYAFDQDQNAIDNAQKRLAPYIEKGMVTFIKDNFRHLQARLREAGVQEIDGICYDLGVSSPQLDQRERGFSYKKDAPLDMRMNQDASLTAYEVVNHYDYHDLVRIFFKYGEDKFSKQIARKIEQAREVKPIETTTELAEIIKLVKPAKELKKKGHPAKQIFQAIRIEVNDELGAADESIQQAMDMLALDGRISVITFHSLEDRLTKQLFKEASTVEVPKGLPFIPDDLKPKMELVSRKPILPSAEELEANNRSHSAKLRVVRKIHK</sequence>
<accession>Q04MC7</accession>
<evidence type="ECO:0000255" key="1">
    <source>
        <dbReference type="HAMAP-Rule" id="MF_01007"/>
    </source>
</evidence>
<reference key="1">
    <citation type="journal article" date="2007" name="J. Bacteriol.">
        <title>Genome sequence of Avery's virulent serotype 2 strain D39 of Streptococcus pneumoniae and comparison with that of unencapsulated laboratory strain R6.</title>
        <authorList>
            <person name="Lanie J.A."/>
            <person name="Ng W.-L."/>
            <person name="Kazmierczak K.M."/>
            <person name="Andrzejewski T.M."/>
            <person name="Davidsen T.M."/>
            <person name="Wayne K.J."/>
            <person name="Tettelin H."/>
            <person name="Glass J.I."/>
            <person name="Winkler M.E."/>
        </authorList>
    </citation>
    <scope>NUCLEOTIDE SEQUENCE [LARGE SCALE GENOMIC DNA]</scope>
    <source>
        <strain>D39 / NCTC 7466</strain>
    </source>
</reference>
<keyword id="KW-0963">Cytoplasm</keyword>
<keyword id="KW-0489">Methyltransferase</keyword>
<keyword id="KW-1185">Reference proteome</keyword>
<keyword id="KW-0698">rRNA processing</keyword>
<keyword id="KW-0949">S-adenosyl-L-methionine</keyword>
<keyword id="KW-0808">Transferase</keyword>
<gene>
    <name evidence="1" type="primary">rsmH</name>
    <name type="synonym">mraW</name>
    <name type="ordered locus">SPD_0304</name>
</gene>
<name>RSMH_STRP2</name>
<dbReference type="EC" id="2.1.1.199" evidence="1"/>
<dbReference type="EMBL" id="CP000410">
    <property type="protein sequence ID" value="ABJ53738.1"/>
    <property type="molecule type" value="Genomic_DNA"/>
</dbReference>
<dbReference type="RefSeq" id="WP_000159434.1">
    <property type="nucleotide sequence ID" value="NZ_JAMLJR010000002.1"/>
</dbReference>
<dbReference type="SMR" id="Q04MC7"/>
<dbReference type="PaxDb" id="373153-SPD_0304"/>
<dbReference type="KEGG" id="spd:SPD_0304"/>
<dbReference type="eggNOG" id="COG0275">
    <property type="taxonomic scope" value="Bacteria"/>
</dbReference>
<dbReference type="HOGENOM" id="CLU_038422_2_0_9"/>
<dbReference type="BioCyc" id="SPNE373153:G1G6V-336-MONOMER"/>
<dbReference type="Proteomes" id="UP000001452">
    <property type="component" value="Chromosome"/>
</dbReference>
<dbReference type="GO" id="GO:0005737">
    <property type="term" value="C:cytoplasm"/>
    <property type="evidence" value="ECO:0007669"/>
    <property type="project" value="UniProtKB-SubCell"/>
</dbReference>
<dbReference type="GO" id="GO:0071424">
    <property type="term" value="F:rRNA (cytosine-N4-)-methyltransferase activity"/>
    <property type="evidence" value="ECO:0007669"/>
    <property type="project" value="UniProtKB-UniRule"/>
</dbReference>
<dbReference type="GO" id="GO:0070475">
    <property type="term" value="P:rRNA base methylation"/>
    <property type="evidence" value="ECO:0007669"/>
    <property type="project" value="UniProtKB-UniRule"/>
</dbReference>
<dbReference type="FunFam" id="1.10.150.170:FF:000001">
    <property type="entry name" value="Ribosomal RNA small subunit methyltransferase H"/>
    <property type="match status" value="1"/>
</dbReference>
<dbReference type="Gene3D" id="1.10.150.170">
    <property type="entry name" value="Putative methyltransferase TM0872, insert domain"/>
    <property type="match status" value="1"/>
</dbReference>
<dbReference type="Gene3D" id="3.40.50.150">
    <property type="entry name" value="Vaccinia Virus protein VP39"/>
    <property type="match status" value="1"/>
</dbReference>
<dbReference type="HAMAP" id="MF_01007">
    <property type="entry name" value="16SrRNA_methyltr_H"/>
    <property type="match status" value="1"/>
</dbReference>
<dbReference type="InterPro" id="IPR002903">
    <property type="entry name" value="RsmH"/>
</dbReference>
<dbReference type="InterPro" id="IPR023397">
    <property type="entry name" value="SAM-dep_MeTrfase_MraW_recog"/>
</dbReference>
<dbReference type="InterPro" id="IPR029063">
    <property type="entry name" value="SAM-dependent_MTases_sf"/>
</dbReference>
<dbReference type="NCBIfam" id="TIGR00006">
    <property type="entry name" value="16S rRNA (cytosine(1402)-N(4))-methyltransferase RsmH"/>
    <property type="match status" value="1"/>
</dbReference>
<dbReference type="PANTHER" id="PTHR11265:SF0">
    <property type="entry name" value="12S RRNA N4-METHYLCYTIDINE METHYLTRANSFERASE"/>
    <property type="match status" value="1"/>
</dbReference>
<dbReference type="PANTHER" id="PTHR11265">
    <property type="entry name" value="S-ADENOSYL-METHYLTRANSFERASE MRAW"/>
    <property type="match status" value="1"/>
</dbReference>
<dbReference type="Pfam" id="PF01795">
    <property type="entry name" value="Methyltransf_5"/>
    <property type="match status" value="1"/>
</dbReference>
<dbReference type="PIRSF" id="PIRSF004486">
    <property type="entry name" value="MraW"/>
    <property type="match status" value="1"/>
</dbReference>
<dbReference type="SUPFAM" id="SSF81799">
    <property type="entry name" value="Putative methyltransferase TM0872, insert domain"/>
    <property type="match status" value="1"/>
</dbReference>
<dbReference type="SUPFAM" id="SSF53335">
    <property type="entry name" value="S-adenosyl-L-methionine-dependent methyltransferases"/>
    <property type="match status" value="1"/>
</dbReference>
<protein>
    <recommendedName>
        <fullName evidence="1">Ribosomal RNA small subunit methyltransferase H</fullName>
        <ecNumber evidence="1">2.1.1.199</ecNumber>
    </recommendedName>
    <alternativeName>
        <fullName evidence="1">16S rRNA m(4)C1402 methyltransferase</fullName>
    </alternativeName>
    <alternativeName>
        <fullName evidence="1">rRNA (cytosine-N(4)-)-methyltransferase RsmH</fullName>
    </alternativeName>
</protein>